<evidence type="ECO:0000255" key="1">
    <source>
        <dbReference type="HAMAP-Rule" id="MF_01633"/>
    </source>
</evidence>
<dbReference type="EC" id="6.3.4.20" evidence="1"/>
<dbReference type="EMBL" id="BA000002">
    <property type="protein sequence ID" value="BAA80468.2"/>
    <property type="molecule type" value="Genomic_DNA"/>
</dbReference>
<dbReference type="PIR" id="F72626">
    <property type="entry name" value="F72626"/>
</dbReference>
<dbReference type="RefSeq" id="WP_010866392.1">
    <property type="nucleotide sequence ID" value="NC_000854.2"/>
</dbReference>
<dbReference type="SMR" id="Q9YBY0"/>
<dbReference type="STRING" id="272557.APE_1470.1"/>
<dbReference type="EnsemblBacteria" id="BAA80468">
    <property type="protein sequence ID" value="BAA80468"/>
    <property type="gene ID" value="APE_1470.1"/>
</dbReference>
<dbReference type="GeneID" id="1446035"/>
<dbReference type="KEGG" id="ape:APE_1470.1"/>
<dbReference type="PATRIC" id="fig|272557.25.peg.995"/>
<dbReference type="eggNOG" id="arCOG00039">
    <property type="taxonomic scope" value="Archaea"/>
</dbReference>
<dbReference type="UniPathway" id="UPA00391"/>
<dbReference type="Proteomes" id="UP000002518">
    <property type="component" value="Chromosome"/>
</dbReference>
<dbReference type="GO" id="GO:0005524">
    <property type="term" value="F:ATP binding"/>
    <property type="evidence" value="ECO:0007669"/>
    <property type="project" value="UniProtKB-UniRule"/>
</dbReference>
<dbReference type="GO" id="GO:0016879">
    <property type="term" value="F:ligase activity, forming carbon-nitrogen bonds"/>
    <property type="evidence" value="ECO:0007669"/>
    <property type="project" value="UniProtKB-UniRule"/>
</dbReference>
<dbReference type="GO" id="GO:0008270">
    <property type="term" value="F:zinc ion binding"/>
    <property type="evidence" value="ECO:0007669"/>
    <property type="project" value="UniProtKB-UniRule"/>
</dbReference>
<dbReference type="CDD" id="cd01995">
    <property type="entry name" value="QueC-like"/>
    <property type="match status" value="1"/>
</dbReference>
<dbReference type="Gene3D" id="3.40.50.620">
    <property type="entry name" value="HUPs"/>
    <property type="match status" value="1"/>
</dbReference>
<dbReference type="HAMAP" id="MF_01633">
    <property type="entry name" value="QueC"/>
    <property type="match status" value="1"/>
</dbReference>
<dbReference type="InterPro" id="IPR018317">
    <property type="entry name" value="QueC"/>
</dbReference>
<dbReference type="InterPro" id="IPR014729">
    <property type="entry name" value="Rossmann-like_a/b/a_fold"/>
</dbReference>
<dbReference type="PANTHER" id="PTHR42914">
    <property type="entry name" value="7-CYANO-7-DEAZAGUANINE SYNTHASE"/>
    <property type="match status" value="1"/>
</dbReference>
<dbReference type="PANTHER" id="PTHR42914:SF1">
    <property type="entry name" value="7-CYANO-7-DEAZAGUANINE SYNTHASE"/>
    <property type="match status" value="1"/>
</dbReference>
<dbReference type="Pfam" id="PF06508">
    <property type="entry name" value="QueC"/>
    <property type="match status" value="1"/>
</dbReference>
<dbReference type="PIRSF" id="PIRSF006293">
    <property type="entry name" value="ExsB"/>
    <property type="match status" value="1"/>
</dbReference>
<dbReference type="SUPFAM" id="SSF52402">
    <property type="entry name" value="Adenine nucleotide alpha hydrolases-like"/>
    <property type="match status" value="1"/>
</dbReference>
<name>QUEC_AERPE</name>
<sequence length="269" mass="30466">MAVCRAVSIVSGGPDSFTYTLIWLSRGCSVHALSFNYGQKASREVLTARKLLEKADELASERGWGRVLEHRLVDISFMKSLWRGTQLTDEEVEVKEDYAPSVVVPIRNVVMLSIAAAYAYSLLEEEDVDRVVVTYGAQRGDIKPRPDTGEPLYPDCSPECIEALQAAFRLCHFRGMRRLEVWSPSREGLSKSDLLKWAYGTVGKLIYDTWSCYLNGKYHCGRCESCINRHRAFKDAGLPDCTRYEKPPGPEAEFESRGDYYVHRSCREA</sequence>
<reference key="1">
    <citation type="journal article" date="1999" name="DNA Res.">
        <title>Complete genome sequence of an aerobic hyper-thermophilic crenarchaeon, Aeropyrum pernix K1.</title>
        <authorList>
            <person name="Kawarabayasi Y."/>
            <person name="Hino Y."/>
            <person name="Horikawa H."/>
            <person name="Yamazaki S."/>
            <person name="Haikawa Y."/>
            <person name="Jin-no K."/>
            <person name="Takahashi M."/>
            <person name="Sekine M."/>
            <person name="Baba S."/>
            <person name="Ankai A."/>
            <person name="Kosugi H."/>
            <person name="Hosoyama A."/>
            <person name="Fukui S."/>
            <person name="Nagai Y."/>
            <person name="Nishijima K."/>
            <person name="Nakazawa H."/>
            <person name="Takamiya M."/>
            <person name="Masuda S."/>
            <person name="Funahashi T."/>
            <person name="Tanaka T."/>
            <person name="Kudoh Y."/>
            <person name="Yamazaki J."/>
            <person name="Kushida N."/>
            <person name="Oguchi A."/>
            <person name="Aoki K."/>
            <person name="Kubota K."/>
            <person name="Nakamura Y."/>
            <person name="Nomura N."/>
            <person name="Sako Y."/>
            <person name="Kikuchi H."/>
        </authorList>
    </citation>
    <scope>NUCLEOTIDE SEQUENCE [LARGE SCALE GENOMIC DNA]</scope>
    <source>
        <strain>ATCC 700893 / DSM 11879 / JCM 9820 / NBRC 100138 / K1</strain>
    </source>
</reference>
<feature type="chain" id="PRO_0000246972" description="7-cyano-7-deazaguanine synthase">
    <location>
        <begin position="1"/>
        <end position="269"/>
    </location>
</feature>
<feature type="binding site" evidence="1">
    <location>
        <begin position="10"/>
        <end position="20"/>
    </location>
    <ligand>
        <name>ATP</name>
        <dbReference type="ChEBI" id="CHEBI:30616"/>
    </ligand>
</feature>
<feature type="binding site" evidence="1">
    <location>
        <position position="212"/>
    </location>
    <ligand>
        <name>Zn(2+)</name>
        <dbReference type="ChEBI" id="CHEBI:29105"/>
    </ligand>
</feature>
<feature type="binding site" evidence="1">
    <location>
        <position position="220"/>
    </location>
    <ligand>
        <name>Zn(2+)</name>
        <dbReference type="ChEBI" id="CHEBI:29105"/>
    </ligand>
</feature>
<feature type="binding site" evidence="1">
    <location>
        <position position="223"/>
    </location>
    <ligand>
        <name>Zn(2+)</name>
        <dbReference type="ChEBI" id="CHEBI:29105"/>
    </ligand>
</feature>
<feature type="binding site" evidence="1">
    <location>
        <position position="226"/>
    </location>
    <ligand>
        <name>Zn(2+)</name>
        <dbReference type="ChEBI" id="CHEBI:29105"/>
    </ligand>
</feature>
<gene>
    <name evidence="1" type="primary">queC</name>
    <name type="ordered locus">APE_1470.1</name>
</gene>
<protein>
    <recommendedName>
        <fullName evidence="1">7-cyano-7-deazaguanine synthase</fullName>
        <ecNumber evidence="1">6.3.4.20</ecNumber>
    </recommendedName>
    <alternativeName>
        <fullName evidence="1">7-cyano-7-carbaguanine synthase</fullName>
    </alternativeName>
    <alternativeName>
        <fullName evidence="1">Archaeosine biosynthesis protein QueC</fullName>
    </alternativeName>
    <alternativeName>
        <fullName evidence="1">PreQ(0) synthase</fullName>
    </alternativeName>
</protein>
<organism>
    <name type="scientific">Aeropyrum pernix (strain ATCC 700893 / DSM 11879 / JCM 9820 / NBRC 100138 / K1)</name>
    <dbReference type="NCBI Taxonomy" id="272557"/>
    <lineage>
        <taxon>Archaea</taxon>
        <taxon>Thermoproteota</taxon>
        <taxon>Thermoprotei</taxon>
        <taxon>Desulfurococcales</taxon>
        <taxon>Desulfurococcaceae</taxon>
        <taxon>Aeropyrum</taxon>
    </lineage>
</organism>
<comment type="function">
    <text evidence="1">Catalyzes the ATP-dependent conversion of 7-carboxy-7-deazaguanine (CDG) to 7-cyano-7-deazaguanine (preQ(0)).</text>
</comment>
<comment type="catalytic activity">
    <reaction evidence="1">
        <text>7-carboxy-7-deazaguanine + NH4(+) + ATP = 7-cyano-7-deazaguanine + ADP + phosphate + H2O + H(+)</text>
        <dbReference type="Rhea" id="RHEA:27982"/>
        <dbReference type="ChEBI" id="CHEBI:15377"/>
        <dbReference type="ChEBI" id="CHEBI:15378"/>
        <dbReference type="ChEBI" id="CHEBI:28938"/>
        <dbReference type="ChEBI" id="CHEBI:30616"/>
        <dbReference type="ChEBI" id="CHEBI:43474"/>
        <dbReference type="ChEBI" id="CHEBI:45075"/>
        <dbReference type="ChEBI" id="CHEBI:61036"/>
        <dbReference type="ChEBI" id="CHEBI:456216"/>
        <dbReference type="EC" id="6.3.4.20"/>
    </reaction>
</comment>
<comment type="cofactor">
    <cofactor evidence="1">
        <name>Zn(2+)</name>
        <dbReference type="ChEBI" id="CHEBI:29105"/>
    </cofactor>
    <text evidence="1">Binds 1 zinc ion per subunit.</text>
</comment>
<comment type="pathway">
    <text evidence="1">Purine metabolism; 7-cyano-7-deazaguanine biosynthesis.</text>
</comment>
<comment type="similarity">
    <text evidence="1">Belongs to the QueC family.</text>
</comment>
<proteinExistence type="inferred from homology"/>
<accession>Q9YBY0</accession>
<keyword id="KW-0067">ATP-binding</keyword>
<keyword id="KW-0436">Ligase</keyword>
<keyword id="KW-0479">Metal-binding</keyword>
<keyword id="KW-0547">Nucleotide-binding</keyword>
<keyword id="KW-1185">Reference proteome</keyword>
<keyword id="KW-0862">Zinc</keyword>